<sequence>MSKQPRKQRKALYTAPLHKRHNSMSVHLSDDLKEEFNRRSFPVRKGDSVEIVRGDFRGTEGKVEGVDLKNYRVLVDGASSQKQDGSKLYQPIHPSNLVLTEIYLDDERRNQALNRKV</sequence>
<name>RL24_METST</name>
<evidence type="ECO:0000255" key="1">
    <source>
        <dbReference type="HAMAP-Rule" id="MF_01326"/>
    </source>
</evidence>
<evidence type="ECO:0000256" key="2">
    <source>
        <dbReference type="SAM" id="MobiDB-lite"/>
    </source>
</evidence>
<evidence type="ECO:0000305" key="3"/>
<keyword id="KW-1185">Reference proteome</keyword>
<keyword id="KW-0687">Ribonucleoprotein</keyword>
<keyword id="KW-0689">Ribosomal protein</keyword>
<keyword id="KW-0694">RNA-binding</keyword>
<keyword id="KW-0699">rRNA-binding</keyword>
<accession>Q2NFW8</accession>
<comment type="function">
    <text evidence="1">One of two assembly initiator proteins, it binds directly to the 5'-end of the 23S rRNA, where it nucleates assembly of the 50S subunit.</text>
</comment>
<comment type="function">
    <text evidence="1">Located at the polypeptide exit tunnel on the outside of the subunit.</text>
</comment>
<comment type="subunit">
    <text evidence="1">Part of the 50S ribosomal subunit.</text>
</comment>
<comment type="similarity">
    <text evidence="1">Belongs to the universal ribosomal protein uL24 family.</text>
</comment>
<feature type="chain" id="PRO_0000241696" description="Large ribosomal subunit protein uL24">
    <location>
        <begin position="1"/>
        <end position="117"/>
    </location>
</feature>
<feature type="region of interest" description="Disordered" evidence="2">
    <location>
        <begin position="1"/>
        <end position="28"/>
    </location>
</feature>
<feature type="compositionally biased region" description="Basic residues" evidence="2">
    <location>
        <begin position="1"/>
        <end position="10"/>
    </location>
</feature>
<organism>
    <name type="scientific">Methanosphaera stadtmanae (strain ATCC 43021 / DSM 3091 / JCM 11832 / MCB-3)</name>
    <dbReference type="NCBI Taxonomy" id="339860"/>
    <lineage>
        <taxon>Archaea</taxon>
        <taxon>Methanobacteriati</taxon>
        <taxon>Methanobacteriota</taxon>
        <taxon>Methanomada group</taxon>
        <taxon>Methanobacteria</taxon>
        <taxon>Methanobacteriales</taxon>
        <taxon>Methanobacteriaceae</taxon>
        <taxon>Methanosphaera</taxon>
    </lineage>
</organism>
<reference key="1">
    <citation type="journal article" date="2006" name="J. Bacteriol.">
        <title>The genome sequence of Methanosphaera stadtmanae reveals why this human intestinal archaeon is restricted to methanol and H2 for methane formation and ATP synthesis.</title>
        <authorList>
            <person name="Fricke W.F."/>
            <person name="Seedorf H."/>
            <person name="Henne A."/>
            <person name="Kruer M."/>
            <person name="Liesegang H."/>
            <person name="Hedderich R."/>
            <person name="Gottschalk G."/>
            <person name="Thauer R.K."/>
        </authorList>
    </citation>
    <scope>NUCLEOTIDE SEQUENCE [LARGE SCALE GENOMIC DNA]</scope>
    <source>
        <strain>ATCC 43021 / DSM 3091 / JCM 11832 / MCB-3</strain>
    </source>
</reference>
<gene>
    <name evidence="1" type="primary">rpl24</name>
    <name type="ordered locus">Msp_0897</name>
</gene>
<protein>
    <recommendedName>
        <fullName evidence="1">Large ribosomal subunit protein uL24</fullName>
    </recommendedName>
    <alternativeName>
        <fullName evidence="3">50S ribosomal protein L24</fullName>
    </alternativeName>
</protein>
<proteinExistence type="inferred from homology"/>
<dbReference type="EMBL" id="CP000102">
    <property type="protein sequence ID" value="ABC57285.1"/>
    <property type="molecule type" value="Genomic_DNA"/>
</dbReference>
<dbReference type="SMR" id="Q2NFW8"/>
<dbReference type="STRING" id="339860.Msp_0897"/>
<dbReference type="KEGG" id="mst:Msp_0897"/>
<dbReference type="eggNOG" id="arCOG04094">
    <property type="taxonomic scope" value="Archaea"/>
</dbReference>
<dbReference type="HOGENOM" id="CLU_093240_2_1_2"/>
<dbReference type="OrthoDB" id="10899at2157"/>
<dbReference type="Proteomes" id="UP000001931">
    <property type="component" value="Chromosome"/>
</dbReference>
<dbReference type="GO" id="GO:0015934">
    <property type="term" value="C:large ribosomal subunit"/>
    <property type="evidence" value="ECO:0007669"/>
    <property type="project" value="InterPro"/>
</dbReference>
<dbReference type="GO" id="GO:0019843">
    <property type="term" value="F:rRNA binding"/>
    <property type="evidence" value="ECO:0007669"/>
    <property type="project" value="UniProtKB-UniRule"/>
</dbReference>
<dbReference type="GO" id="GO:0003735">
    <property type="term" value="F:structural constituent of ribosome"/>
    <property type="evidence" value="ECO:0007669"/>
    <property type="project" value="InterPro"/>
</dbReference>
<dbReference type="GO" id="GO:0006412">
    <property type="term" value="P:translation"/>
    <property type="evidence" value="ECO:0007669"/>
    <property type="project" value="UniProtKB-UniRule"/>
</dbReference>
<dbReference type="CDD" id="cd06089">
    <property type="entry name" value="KOW_RPL26"/>
    <property type="match status" value="1"/>
</dbReference>
<dbReference type="Gene3D" id="2.30.30.30">
    <property type="match status" value="1"/>
</dbReference>
<dbReference type="HAMAP" id="MF_01326_A">
    <property type="entry name" value="Ribosomal_uL24_A"/>
    <property type="match status" value="1"/>
</dbReference>
<dbReference type="InterPro" id="IPR005824">
    <property type="entry name" value="KOW"/>
</dbReference>
<dbReference type="InterPro" id="IPR014722">
    <property type="entry name" value="Rib_uL2_dom2"/>
</dbReference>
<dbReference type="InterPro" id="IPR005825">
    <property type="entry name" value="Ribosomal_uL24_CS"/>
</dbReference>
<dbReference type="InterPro" id="IPR005756">
    <property type="entry name" value="Ribosomal_uL24_euk/arc"/>
</dbReference>
<dbReference type="InterPro" id="IPR041988">
    <property type="entry name" value="Ribosomal_uL24_KOW"/>
</dbReference>
<dbReference type="InterPro" id="IPR008991">
    <property type="entry name" value="Translation_prot_SH3-like_sf"/>
</dbReference>
<dbReference type="NCBIfam" id="TIGR01080">
    <property type="entry name" value="rplX_A_E"/>
    <property type="match status" value="1"/>
</dbReference>
<dbReference type="PANTHER" id="PTHR11143">
    <property type="entry name" value="60S RIBOSOMAL PROTEIN L26 FAMILY MEMBER"/>
    <property type="match status" value="1"/>
</dbReference>
<dbReference type="Pfam" id="PF00467">
    <property type="entry name" value="KOW"/>
    <property type="match status" value="1"/>
</dbReference>
<dbReference type="Pfam" id="PF16906">
    <property type="entry name" value="Ribosomal_L26"/>
    <property type="match status" value="1"/>
</dbReference>
<dbReference type="SMART" id="SM00739">
    <property type="entry name" value="KOW"/>
    <property type="match status" value="1"/>
</dbReference>
<dbReference type="SUPFAM" id="SSF50104">
    <property type="entry name" value="Translation proteins SH3-like domain"/>
    <property type="match status" value="1"/>
</dbReference>
<dbReference type="PROSITE" id="PS01108">
    <property type="entry name" value="RIBOSOMAL_L24"/>
    <property type="match status" value="1"/>
</dbReference>